<name>TATA_KORVE</name>
<sequence>MFGELGVPEVLFILGIALLIFGPKKLGDLGKGLGEGVRGFKSALRDEPKKEETKA</sequence>
<feature type="chain" id="PRO_1000058945" description="Sec-independent protein translocase protein TatA">
    <location>
        <begin position="1"/>
        <end position="55"/>
    </location>
</feature>
<feature type="transmembrane region" description="Helical" evidence="1">
    <location>
        <begin position="1"/>
        <end position="21"/>
    </location>
</feature>
<comment type="function">
    <text evidence="1">Part of the twin-arginine translocation (Tat) system that transports large folded proteins containing a characteristic twin-arginine motif in their signal peptide across membranes. TatA could form the protein-conducting channel of the Tat system.</text>
</comment>
<comment type="subunit">
    <text evidence="1">Forms a complex with TatC.</text>
</comment>
<comment type="subcellular location">
    <subcellularLocation>
        <location evidence="1">Cell inner membrane</location>
        <topology evidence="1">Single-pass membrane protein</topology>
    </subcellularLocation>
</comment>
<comment type="similarity">
    <text evidence="1">Belongs to the TatA/E family.</text>
</comment>
<keyword id="KW-0997">Cell inner membrane</keyword>
<keyword id="KW-1003">Cell membrane</keyword>
<keyword id="KW-0472">Membrane</keyword>
<keyword id="KW-0653">Protein transport</keyword>
<keyword id="KW-1185">Reference proteome</keyword>
<keyword id="KW-0811">Translocation</keyword>
<keyword id="KW-0812">Transmembrane</keyword>
<keyword id="KW-1133">Transmembrane helix</keyword>
<keyword id="KW-0813">Transport</keyword>
<proteinExistence type="inferred from homology"/>
<protein>
    <recommendedName>
        <fullName evidence="1">Sec-independent protein translocase protein TatA</fullName>
    </recommendedName>
</protein>
<gene>
    <name evidence="1" type="primary">tatA</name>
    <name type="ordered locus">Acid345_2379</name>
</gene>
<accession>Q1IP20</accession>
<dbReference type="EMBL" id="CP000360">
    <property type="protein sequence ID" value="ABF41380.1"/>
    <property type="molecule type" value="Genomic_DNA"/>
</dbReference>
<dbReference type="RefSeq" id="WP_011523181.1">
    <property type="nucleotide sequence ID" value="NC_008009.1"/>
</dbReference>
<dbReference type="SMR" id="Q1IP20"/>
<dbReference type="STRING" id="204669.Acid345_2379"/>
<dbReference type="EnsemblBacteria" id="ABF41380">
    <property type="protein sequence ID" value="ABF41380"/>
    <property type="gene ID" value="Acid345_2379"/>
</dbReference>
<dbReference type="KEGG" id="aba:Acid345_2379"/>
<dbReference type="eggNOG" id="COG1826">
    <property type="taxonomic scope" value="Bacteria"/>
</dbReference>
<dbReference type="HOGENOM" id="CLU_086034_6_0_0"/>
<dbReference type="Proteomes" id="UP000002432">
    <property type="component" value="Chromosome"/>
</dbReference>
<dbReference type="GO" id="GO:0033281">
    <property type="term" value="C:TAT protein transport complex"/>
    <property type="evidence" value="ECO:0007669"/>
    <property type="project" value="UniProtKB-UniRule"/>
</dbReference>
<dbReference type="GO" id="GO:0008320">
    <property type="term" value="F:protein transmembrane transporter activity"/>
    <property type="evidence" value="ECO:0007669"/>
    <property type="project" value="UniProtKB-UniRule"/>
</dbReference>
<dbReference type="GO" id="GO:0043953">
    <property type="term" value="P:protein transport by the Tat complex"/>
    <property type="evidence" value="ECO:0007669"/>
    <property type="project" value="UniProtKB-UniRule"/>
</dbReference>
<dbReference type="Gene3D" id="1.20.5.3310">
    <property type="match status" value="1"/>
</dbReference>
<dbReference type="HAMAP" id="MF_00236">
    <property type="entry name" value="TatA_E"/>
    <property type="match status" value="1"/>
</dbReference>
<dbReference type="InterPro" id="IPR003369">
    <property type="entry name" value="TatA/B/E"/>
</dbReference>
<dbReference type="InterPro" id="IPR006312">
    <property type="entry name" value="TatA/E"/>
</dbReference>
<dbReference type="NCBIfam" id="TIGR01411">
    <property type="entry name" value="tatAE"/>
    <property type="match status" value="1"/>
</dbReference>
<dbReference type="PANTHER" id="PTHR42982">
    <property type="entry name" value="SEC-INDEPENDENT PROTEIN TRANSLOCASE PROTEIN TATA"/>
    <property type="match status" value="1"/>
</dbReference>
<dbReference type="PANTHER" id="PTHR42982:SF1">
    <property type="entry name" value="SEC-INDEPENDENT PROTEIN TRANSLOCASE PROTEIN TATA"/>
    <property type="match status" value="1"/>
</dbReference>
<dbReference type="Pfam" id="PF02416">
    <property type="entry name" value="TatA_B_E"/>
    <property type="match status" value="1"/>
</dbReference>
<organism>
    <name type="scientific">Koribacter versatilis (strain Ellin345)</name>
    <dbReference type="NCBI Taxonomy" id="204669"/>
    <lineage>
        <taxon>Bacteria</taxon>
        <taxon>Pseudomonadati</taxon>
        <taxon>Acidobacteriota</taxon>
        <taxon>Terriglobia</taxon>
        <taxon>Terriglobales</taxon>
        <taxon>Candidatus Korobacteraceae</taxon>
        <taxon>Candidatus Korobacter</taxon>
    </lineage>
</organism>
<evidence type="ECO:0000255" key="1">
    <source>
        <dbReference type="HAMAP-Rule" id="MF_00236"/>
    </source>
</evidence>
<reference key="1">
    <citation type="journal article" date="2009" name="Appl. Environ. Microbiol.">
        <title>Three genomes from the phylum Acidobacteria provide insight into the lifestyles of these microorganisms in soils.</title>
        <authorList>
            <person name="Ward N.L."/>
            <person name="Challacombe J.F."/>
            <person name="Janssen P.H."/>
            <person name="Henrissat B."/>
            <person name="Coutinho P.M."/>
            <person name="Wu M."/>
            <person name="Xie G."/>
            <person name="Haft D.H."/>
            <person name="Sait M."/>
            <person name="Badger J."/>
            <person name="Barabote R.D."/>
            <person name="Bradley B."/>
            <person name="Brettin T.S."/>
            <person name="Brinkac L.M."/>
            <person name="Bruce D."/>
            <person name="Creasy T."/>
            <person name="Daugherty S.C."/>
            <person name="Davidsen T.M."/>
            <person name="DeBoy R.T."/>
            <person name="Detter J.C."/>
            <person name="Dodson R.J."/>
            <person name="Durkin A.S."/>
            <person name="Ganapathy A."/>
            <person name="Gwinn-Giglio M."/>
            <person name="Han C.S."/>
            <person name="Khouri H."/>
            <person name="Kiss H."/>
            <person name="Kothari S.P."/>
            <person name="Madupu R."/>
            <person name="Nelson K.E."/>
            <person name="Nelson W.C."/>
            <person name="Paulsen I."/>
            <person name="Penn K."/>
            <person name="Ren Q."/>
            <person name="Rosovitz M.J."/>
            <person name="Selengut J.D."/>
            <person name="Shrivastava S."/>
            <person name="Sullivan S.A."/>
            <person name="Tapia R."/>
            <person name="Thompson L.S."/>
            <person name="Watkins K.L."/>
            <person name="Yang Q."/>
            <person name="Yu C."/>
            <person name="Zafar N."/>
            <person name="Zhou L."/>
            <person name="Kuske C.R."/>
        </authorList>
    </citation>
    <scope>NUCLEOTIDE SEQUENCE [LARGE SCALE GENOMIC DNA]</scope>
    <source>
        <strain>Ellin345</strain>
    </source>
</reference>